<proteinExistence type="evidence at transcript level"/>
<keyword id="KW-1185">Reference proteome</keyword>
<keyword id="KW-0687">Ribonucleoprotein</keyword>
<keyword id="KW-0689">Ribosomal protein</keyword>
<dbReference type="EMBL" id="L31416">
    <property type="protein sequence ID" value="AAA72054.1"/>
    <property type="molecule type" value="mRNA"/>
</dbReference>
<dbReference type="PIR" id="S50116">
    <property type="entry name" value="S50116"/>
</dbReference>
<dbReference type="RefSeq" id="NP_001311790.1">
    <property type="nucleotide sequence ID" value="NM_001324861.1"/>
</dbReference>
<dbReference type="SMR" id="P49627"/>
<dbReference type="STRING" id="4097.P49627"/>
<dbReference type="PaxDb" id="4097-P49627"/>
<dbReference type="GeneID" id="107764897"/>
<dbReference type="KEGG" id="nta:107764897"/>
<dbReference type="OrthoDB" id="10264538at2759"/>
<dbReference type="Proteomes" id="UP000084051">
    <property type="component" value="Unplaced"/>
</dbReference>
<dbReference type="GO" id="GO:0022625">
    <property type="term" value="C:cytosolic large ribosomal subunit"/>
    <property type="evidence" value="ECO:0000318"/>
    <property type="project" value="GO_Central"/>
</dbReference>
<dbReference type="GO" id="GO:0003723">
    <property type="term" value="F:RNA binding"/>
    <property type="evidence" value="ECO:0000318"/>
    <property type="project" value="GO_Central"/>
</dbReference>
<dbReference type="GO" id="GO:0003735">
    <property type="term" value="F:structural constituent of ribosome"/>
    <property type="evidence" value="ECO:0000318"/>
    <property type="project" value="GO_Central"/>
</dbReference>
<dbReference type="GO" id="GO:0006412">
    <property type="term" value="P:translation"/>
    <property type="evidence" value="ECO:0007669"/>
    <property type="project" value="InterPro"/>
</dbReference>
<dbReference type="FunFam" id="1.20.5.110:FF:000003">
    <property type="entry name" value="60S ribosomal protein L13"/>
    <property type="match status" value="1"/>
</dbReference>
<dbReference type="Gene3D" id="1.20.5.110">
    <property type="match status" value="1"/>
</dbReference>
<dbReference type="HAMAP" id="MF_00499">
    <property type="entry name" value="Ribosomal_eL13"/>
    <property type="match status" value="1"/>
</dbReference>
<dbReference type="InterPro" id="IPR001380">
    <property type="entry name" value="Ribosomal_eL13"/>
</dbReference>
<dbReference type="InterPro" id="IPR018256">
    <property type="entry name" value="Ribosomal_eL13_CS"/>
</dbReference>
<dbReference type="PANTHER" id="PTHR11722">
    <property type="entry name" value="60S RIBOSOMAL PROTEIN L13"/>
    <property type="match status" value="1"/>
</dbReference>
<dbReference type="PANTHER" id="PTHR11722:SF0">
    <property type="entry name" value="LARGE RIBOSOMAL SUBUNIT PROTEIN EL13"/>
    <property type="match status" value="1"/>
</dbReference>
<dbReference type="Pfam" id="PF01294">
    <property type="entry name" value="Ribosomal_L13e"/>
    <property type="match status" value="1"/>
</dbReference>
<dbReference type="PROSITE" id="PS01104">
    <property type="entry name" value="RIBOSOMAL_L13E"/>
    <property type="match status" value="1"/>
</dbReference>
<sequence>MYSANGHFKKHWQNYVKTWFNQPARKTRRRIARQKKAVKISPRPTAGTLRPIVHGQTLKYNMKVRSGRGFSLEELKAAGIPKKLAPTIGIAVDHRRRNRSLEGLQTNVQRLEDLQGQLVVFPRRASRSRLVILPPRNCLTATQVHGAYMPIEREKHQLILSKVLKKMKSFNAYAKLRVERTNERHIGARMKRAAEAEKEEKK</sequence>
<name>RL13_TOBAC</name>
<gene>
    <name type="primary">RPL13</name>
</gene>
<reference key="1">
    <citation type="journal article" date="1994" name="Nucleic Acids Res.">
        <title>Plant activating sequences: positively charged peptides are functional as transcriptional activation domains.</title>
        <authorList>
            <person name="Estruch J.J."/>
            <person name="Crossland L."/>
            <person name="Goff S.A."/>
        </authorList>
    </citation>
    <scope>NUCLEOTIDE SEQUENCE [MRNA]</scope>
    <source>
        <strain>cv. Xanthi</strain>
        <tissue>Seedling</tissue>
    </source>
</reference>
<protein>
    <recommendedName>
        <fullName evidence="1">Large ribosomal subunit protein eL13</fullName>
    </recommendedName>
    <alternativeName>
        <fullName>60S ribosomal protein L13</fullName>
    </alternativeName>
    <alternativeName>
        <fullName>Clone 6.2.1 protein</fullName>
    </alternativeName>
</protein>
<accession>P49627</accession>
<evidence type="ECO:0000305" key="1"/>
<comment type="similarity">
    <text evidence="1">Belongs to the eukaryotic ribosomal protein eL13 family.</text>
</comment>
<organism>
    <name type="scientific">Nicotiana tabacum</name>
    <name type="common">Common tobacco</name>
    <dbReference type="NCBI Taxonomy" id="4097"/>
    <lineage>
        <taxon>Eukaryota</taxon>
        <taxon>Viridiplantae</taxon>
        <taxon>Streptophyta</taxon>
        <taxon>Embryophyta</taxon>
        <taxon>Tracheophyta</taxon>
        <taxon>Spermatophyta</taxon>
        <taxon>Magnoliopsida</taxon>
        <taxon>eudicotyledons</taxon>
        <taxon>Gunneridae</taxon>
        <taxon>Pentapetalae</taxon>
        <taxon>asterids</taxon>
        <taxon>lamiids</taxon>
        <taxon>Solanales</taxon>
        <taxon>Solanaceae</taxon>
        <taxon>Nicotianoideae</taxon>
        <taxon>Nicotianeae</taxon>
        <taxon>Nicotiana</taxon>
    </lineage>
</organism>
<feature type="chain" id="PRO_0000192934" description="Large ribosomal subunit protein eL13">
    <location>
        <begin position="1"/>
        <end position="202"/>
    </location>
</feature>